<accession>B5FJW2</accession>
<reference key="1">
    <citation type="journal article" date="2011" name="J. Bacteriol.">
        <title>Comparative genomics of 28 Salmonella enterica isolates: evidence for CRISPR-mediated adaptive sublineage evolution.</title>
        <authorList>
            <person name="Fricke W.F."/>
            <person name="Mammel M.K."/>
            <person name="McDermott P.F."/>
            <person name="Tartera C."/>
            <person name="White D.G."/>
            <person name="Leclerc J.E."/>
            <person name="Ravel J."/>
            <person name="Cebula T.A."/>
        </authorList>
    </citation>
    <scope>NUCLEOTIDE SEQUENCE [LARGE SCALE GENOMIC DNA]</scope>
    <source>
        <strain>CT_02021853</strain>
    </source>
</reference>
<name>GMHA_SALDC</name>
<evidence type="ECO:0000255" key="1">
    <source>
        <dbReference type="HAMAP-Rule" id="MF_00067"/>
    </source>
</evidence>
<organism>
    <name type="scientific">Salmonella dublin (strain CT_02021853)</name>
    <dbReference type="NCBI Taxonomy" id="439851"/>
    <lineage>
        <taxon>Bacteria</taxon>
        <taxon>Pseudomonadati</taxon>
        <taxon>Pseudomonadota</taxon>
        <taxon>Gammaproteobacteria</taxon>
        <taxon>Enterobacterales</taxon>
        <taxon>Enterobacteriaceae</taxon>
        <taxon>Salmonella</taxon>
    </lineage>
</organism>
<dbReference type="EC" id="5.3.1.28" evidence="1"/>
<dbReference type="EMBL" id="CP001144">
    <property type="protein sequence ID" value="ACH74037.1"/>
    <property type="molecule type" value="Genomic_DNA"/>
</dbReference>
<dbReference type="SMR" id="B5FJW2"/>
<dbReference type="KEGG" id="sed:SeD_A0340"/>
<dbReference type="HOGENOM" id="CLU_080999_4_0_6"/>
<dbReference type="UniPathway" id="UPA00041">
    <property type="reaction ID" value="UER00436"/>
</dbReference>
<dbReference type="Proteomes" id="UP000008322">
    <property type="component" value="Chromosome"/>
</dbReference>
<dbReference type="GO" id="GO:0005737">
    <property type="term" value="C:cytoplasm"/>
    <property type="evidence" value="ECO:0007669"/>
    <property type="project" value="UniProtKB-SubCell"/>
</dbReference>
<dbReference type="GO" id="GO:0097367">
    <property type="term" value="F:carbohydrate derivative binding"/>
    <property type="evidence" value="ECO:0007669"/>
    <property type="project" value="InterPro"/>
</dbReference>
<dbReference type="GO" id="GO:0008968">
    <property type="term" value="F:D-sedoheptulose 7-phosphate isomerase activity"/>
    <property type="evidence" value="ECO:0007669"/>
    <property type="project" value="UniProtKB-UniRule"/>
</dbReference>
<dbReference type="GO" id="GO:0008270">
    <property type="term" value="F:zinc ion binding"/>
    <property type="evidence" value="ECO:0007669"/>
    <property type="project" value="UniProtKB-UniRule"/>
</dbReference>
<dbReference type="GO" id="GO:0005975">
    <property type="term" value="P:carbohydrate metabolic process"/>
    <property type="evidence" value="ECO:0007669"/>
    <property type="project" value="UniProtKB-UniRule"/>
</dbReference>
<dbReference type="GO" id="GO:2001061">
    <property type="term" value="P:D-glycero-D-manno-heptose 7-phosphate biosynthetic process"/>
    <property type="evidence" value="ECO:0007669"/>
    <property type="project" value="UniProtKB-UniPathway"/>
</dbReference>
<dbReference type="CDD" id="cd05006">
    <property type="entry name" value="SIS_GmhA"/>
    <property type="match status" value="1"/>
</dbReference>
<dbReference type="FunFam" id="3.40.50.10490:FF:000013">
    <property type="entry name" value="Phosphoheptose isomerase"/>
    <property type="match status" value="1"/>
</dbReference>
<dbReference type="Gene3D" id="3.40.50.10490">
    <property type="entry name" value="Glucose-6-phosphate isomerase like protein, domain 1"/>
    <property type="match status" value="1"/>
</dbReference>
<dbReference type="HAMAP" id="MF_00067">
    <property type="entry name" value="GmhA"/>
    <property type="match status" value="1"/>
</dbReference>
<dbReference type="InterPro" id="IPR035461">
    <property type="entry name" value="GmhA/DiaA"/>
</dbReference>
<dbReference type="InterPro" id="IPR004515">
    <property type="entry name" value="Phosphoheptose_Isoase"/>
</dbReference>
<dbReference type="InterPro" id="IPR001347">
    <property type="entry name" value="SIS_dom"/>
</dbReference>
<dbReference type="InterPro" id="IPR046348">
    <property type="entry name" value="SIS_dom_sf"/>
</dbReference>
<dbReference type="InterPro" id="IPR050099">
    <property type="entry name" value="SIS_GmhA/DiaA_subfam"/>
</dbReference>
<dbReference type="NCBIfam" id="TIGR00441">
    <property type="entry name" value="gmhA"/>
    <property type="match status" value="1"/>
</dbReference>
<dbReference type="NCBIfam" id="NF001628">
    <property type="entry name" value="PRK00414.1"/>
    <property type="match status" value="1"/>
</dbReference>
<dbReference type="PANTHER" id="PTHR30390:SF7">
    <property type="entry name" value="PHOSPHOHEPTOSE ISOMERASE"/>
    <property type="match status" value="1"/>
</dbReference>
<dbReference type="PANTHER" id="PTHR30390">
    <property type="entry name" value="SEDOHEPTULOSE 7-PHOSPHATE ISOMERASE / DNAA INITIATOR-ASSOCIATING FACTOR FOR REPLICATION INITIATION"/>
    <property type="match status" value="1"/>
</dbReference>
<dbReference type="Pfam" id="PF13580">
    <property type="entry name" value="SIS_2"/>
    <property type="match status" value="1"/>
</dbReference>
<dbReference type="SUPFAM" id="SSF53697">
    <property type="entry name" value="SIS domain"/>
    <property type="match status" value="1"/>
</dbReference>
<dbReference type="PROSITE" id="PS51464">
    <property type="entry name" value="SIS"/>
    <property type="match status" value="1"/>
</dbReference>
<proteinExistence type="inferred from homology"/>
<keyword id="KW-0119">Carbohydrate metabolism</keyword>
<keyword id="KW-0963">Cytoplasm</keyword>
<keyword id="KW-0413">Isomerase</keyword>
<keyword id="KW-0479">Metal-binding</keyword>
<keyword id="KW-0862">Zinc</keyword>
<sequence>MYQDLIHNELNEAAETLANFLKDDANIHAIQRAAVLLADSFKAGGKVLSCGNGGSHCDAMHFAEELTGRYRENRPGYPAIAISDVSHISCVSNDFGYDYIFSRYVEAVGREGDVLLGISTSGNSGNVIKAIAAAREKGMKVITLTGKDGGKMAGTADIEIRVPHFGYADRIQEIHIKVIHILIQLIEKEMVK</sequence>
<feature type="chain" id="PRO_1000092287" description="Phosphoheptose isomerase">
    <location>
        <begin position="1"/>
        <end position="192"/>
    </location>
</feature>
<feature type="domain" description="SIS" evidence="1">
    <location>
        <begin position="37"/>
        <end position="192"/>
    </location>
</feature>
<feature type="binding site" evidence="1">
    <location>
        <begin position="52"/>
        <end position="54"/>
    </location>
    <ligand>
        <name>substrate</name>
    </ligand>
</feature>
<feature type="binding site" evidence="1">
    <location>
        <position position="61"/>
    </location>
    <ligand>
        <name>Zn(2+)</name>
        <dbReference type="ChEBI" id="CHEBI:29105"/>
    </ligand>
</feature>
<feature type="binding site" evidence="1">
    <location>
        <position position="65"/>
    </location>
    <ligand>
        <name>substrate</name>
    </ligand>
</feature>
<feature type="binding site" evidence="1">
    <location>
        <position position="65"/>
    </location>
    <ligand>
        <name>Zn(2+)</name>
        <dbReference type="ChEBI" id="CHEBI:29105"/>
    </ligand>
</feature>
<feature type="binding site" evidence="1">
    <location>
        <begin position="93"/>
        <end position="94"/>
    </location>
    <ligand>
        <name>substrate</name>
    </ligand>
</feature>
<feature type="binding site" evidence="1">
    <location>
        <begin position="119"/>
        <end position="121"/>
    </location>
    <ligand>
        <name>substrate</name>
    </ligand>
</feature>
<feature type="binding site" evidence="1">
    <location>
        <position position="124"/>
    </location>
    <ligand>
        <name>substrate</name>
    </ligand>
</feature>
<feature type="binding site" evidence="1">
    <location>
        <position position="172"/>
    </location>
    <ligand>
        <name>substrate</name>
    </ligand>
</feature>
<feature type="binding site" evidence="1">
    <location>
        <position position="172"/>
    </location>
    <ligand>
        <name>Zn(2+)</name>
        <dbReference type="ChEBI" id="CHEBI:29105"/>
    </ligand>
</feature>
<feature type="binding site" evidence="1">
    <location>
        <position position="180"/>
    </location>
    <ligand>
        <name>Zn(2+)</name>
        <dbReference type="ChEBI" id="CHEBI:29105"/>
    </ligand>
</feature>
<protein>
    <recommendedName>
        <fullName evidence="1">Phosphoheptose isomerase</fullName>
        <ecNumber evidence="1">5.3.1.28</ecNumber>
    </recommendedName>
    <alternativeName>
        <fullName evidence="1">Sedoheptulose 7-phosphate isomerase</fullName>
    </alternativeName>
</protein>
<comment type="function">
    <text evidence="1">Catalyzes the isomerization of sedoheptulose 7-phosphate in D-glycero-D-manno-heptose 7-phosphate.</text>
</comment>
<comment type="catalytic activity">
    <reaction evidence="1">
        <text>2 D-sedoheptulose 7-phosphate = D-glycero-alpha-D-manno-heptose 7-phosphate + D-glycero-beta-D-manno-heptose 7-phosphate</text>
        <dbReference type="Rhea" id="RHEA:27489"/>
        <dbReference type="ChEBI" id="CHEBI:57483"/>
        <dbReference type="ChEBI" id="CHEBI:60203"/>
        <dbReference type="ChEBI" id="CHEBI:60204"/>
        <dbReference type="EC" id="5.3.1.28"/>
    </reaction>
</comment>
<comment type="cofactor">
    <cofactor evidence="1">
        <name>Zn(2+)</name>
        <dbReference type="ChEBI" id="CHEBI:29105"/>
    </cofactor>
    <text evidence="1">Binds 1 zinc ion per subunit.</text>
</comment>
<comment type="pathway">
    <text evidence="1">Carbohydrate biosynthesis; D-glycero-D-manno-heptose 7-phosphate biosynthesis; D-glycero-alpha-D-manno-heptose 7-phosphate and D-glycero-beta-D-manno-heptose 7-phosphate from sedoheptulose 7-phosphate: step 1/1.</text>
</comment>
<comment type="subunit">
    <text evidence="1">Homotetramer.</text>
</comment>
<comment type="subcellular location">
    <subcellularLocation>
        <location evidence="1">Cytoplasm</location>
    </subcellularLocation>
</comment>
<comment type="miscellaneous">
    <text evidence="1">The reaction produces a racemic mixture of D-glycero-alpha-D-manno-heptose 7-phosphate and D-glycero-beta-D-manno-heptose 7-phosphate.</text>
</comment>
<comment type="similarity">
    <text evidence="1">Belongs to the SIS family. GmhA subfamily.</text>
</comment>
<gene>
    <name evidence="1" type="primary">gmhA</name>
    <name type="ordered locus">SeD_A0340</name>
</gene>